<organism>
    <name type="scientific">Mycosarcoma maydis</name>
    <name type="common">Corn smut fungus</name>
    <name type="synonym">Ustilago maydis</name>
    <dbReference type="NCBI Taxonomy" id="5270"/>
    <lineage>
        <taxon>Eukaryota</taxon>
        <taxon>Fungi</taxon>
        <taxon>Dikarya</taxon>
        <taxon>Basidiomycota</taxon>
        <taxon>Ustilaginomycotina</taxon>
        <taxon>Ustilaginomycetes</taxon>
        <taxon>Ustilaginales</taxon>
        <taxon>Ustilaginaceae</taxon>
        <taxon>Mycosarcoma</taxon>
    </lineage>
</organism>
<comment type="function">
    <text evidence="3">Catalyzes the conversion of L-ornithine to N(5)-hydroxyornithine, the first step in the biosynthesis of all hydroxamate-containing siderophores, such as ferrichrome.</text>
</comment>
<comment type="catalytic activity">
    <reaction evidence="3">
        <text>L-ornithine + NADPH + O2 = N(5)-hydroxy-L-ornithine + NADP(+) + H2O</text>
        <dbReference type="Rhea" id="RHEA:41508"/>
        <dbReference type="ChEBI" id="CHEBI:15377"/>
        <dbReference type="ChEBI" id="CHEBI:15379"/>
        <dbReference type="ChEBI" id="CHEBI:46911"/>
        <dbReference type="ChEBI" id="CHEBI:57783"/>
        <dbReference type="ChEBI" id="CHEBI:58349"/>
        <dbReference type="ChEBI" id="CHEBI:78275"/>
        <dbReference type="EC" id="1.14.13.196"/>
    </reaction>
</comment>
<comment type="catalytic activity">
    <reaction evidence="3">
        <text>L-ornithine + NADH + O2 = N(5)-hydroxy-L-ornithine + NAD(+) + H2O</text>
        <dbReference type="Rhea" id="RHEA:41512"/>
        <dbReference type="ChEBI" id="CHEBI:15377"/>
        <dbReference type="ChEBI" id="CHEBI:15379"/>
        <dbReference type="ChEBI" id="CHEBI:46911"/>
        <dbReference type="ChEBI" id="CHEBI:57540"/>
        <dbReference type="ChEBI" id="CHEBI:57945"/>
        <dbReference type="ChEBI" id="CHEBI:78275"/>
        <dbReference type="EC" id="1.14.13.196"/>
    </reaction>
</comment>
<comment type="cofactor">
    <cofactor evidence="1">
        <name>FAD</name>
        <dbReference type="ChEBI" id="CHEBI:57692"/>
    </cofactor>
    <text evidence="1">Binds 1 FAD per subunit.</text>
</comment>
<comment type="pathway">
    <text evidence="3">Siderophore biosynthesis; ferrichrome biosynthesis.</text>
</comment>
<comment type="subunit">
    <text evidence="1">Homotetramer.</text>
</comment>
<comment type="similarity">
    <text evidence="5">Belongs to the lysine N(6)-hydroxylase/L-ornithine N(5)-oxygenase family.</text>
</comment>
<comment type="sequence caution" evidence="5">
    <conflict type="frameshift">
        <sequence resource="EMBL" id="M98520"/>
    </conflict>
</comment>
<comment type="sequence caution" evidence="5">
    <conflict type="frameshift">
        <sequence resource="EMBL" id="M98523"/>
    </conflict>
</comment>
<feature type="chain" id="PRO_0000204035" description="L-ornithine N(5)-monooxygenase">
    <location>
        <begin position="1"/>
        <end position="649"/>
    </location>
</feature>
<feature type="region of interest" description="Disordered" evidence="2">
    <location>
        <begin position="512"/>
        <end position="547"/>
    </location>
</feature>
<feature type="region of interest" description="Disordered" evidence="2">
    <location>
        <begin position="585"/>
        <end position="611"/>
    </location>
</feature>
<feature type="compositionally biased region" description="Low complexity" evidence="2">
    <location>
        <begin position="520"/>
        <end position="536"/>
    </location>
</feature>
<feature type="compositionally biased region" description="Polar residues" evidence="2">
    <location>
        <begin position="537"/>
        <end position="547"/>
    </location>
</feature>
<feature type="compositionally biased region" description="Low complexity" evidence="2">
    <location>
        <begin position="596"/>
        <end position="611"/>
    </location>
</feature>
<feature type="binding site" evidence="1">
    <location>
        <begin position="72"/>
        <end position="80"/>
    </location>
    <ligand>
        <name>FAD</name>
        <dbReference type="ChEBI" id="CHEBI:57692"/>
    </ligand>
</feature>
<feature type="binding site" evidence="1">
    <location>
        <position position="91"/>
    </location>
    <ligand>
        <name>FAD</name>
        <dbReference type="ChEBI" id="CHEBI:57692"/>
    </ligand>
</feature>
<feature type="binding site" evidence="1">
    <location>
        <position position="96"/>
    </location>
    <ligand>
        <name>substrate</name>
    </ligand>
</feature>
<feature type="binding site" evidence="1">
    <location>
        <position position="157"/>
    </location>
    <ligand>
        <name>FAD</name>
        <dbReference type="ChEBI" id="CHEBI:57692"/>
    </ligand>
</feature>
<feature type="binding site" evidence="1">
    <location>
        <begin position="289"/>
        <end position="292"/>
    </location>
    <ligand>
        <name>NADP(+)</name>
        <dbReference type="ChEBI" id="CHEBI:58349"/>
    </ligand>
</feature>
<feature type="binding site" evidence="1">
    <location>
        <position position="314"/>
    </location>
    <ligand>
        <name>NADP(+)</name>
        <dbReference type="ChEBI" id="CHEBI:58349"/>
    </ligand>
</feature>
<feature type="binding site" evidence="1">
    <location>
        <begin position="328"/>
        <end position="331"/>
    </location>
    <ligand>
        <name>substrate</name>
    </ligand>
</feature>
<feature type="binding site" evidence="1">
    <location>
        <begin position="359"/>
        <end position="361"/>
    </location>
    <ligand>
        <name>NADP(+)</name>
        <dbReference type="ChEBI" id="CHEBI:58349"/>
    </ligand>
</feature>
<feature type="binding site" evidence="1">
    <location>
        <position position="359"/>
    </location>
    <ligand>
        <name>substrate</name>
    </ligand>
</feature>
<feature type="binding site" evidence="1">
    <location>
        <begin position="569"/>
        <end position="571"/>
    </location>
    <ligand>
        <name>FAD</name>
        <dbReference type="ChEBI" id="CHEBI:57692"/>
    </ligand>
</feature>
<feature type="binding site" evidence="1">
    <location>
        <position position="572"/>
    </location>
    <ligand>
        <name>substrate</name>
    </ligand>
</feature>
<proteinExistence type="evidence at protein level"/>
<protein>
    <recommendedName>
        <fullName evidence="1">L-ornithine N(5)-monooxygenase</fullName>
        <shortName evidence="1">OMO</shortName>
        <ecNumber evidence="1">1.14.13.196</ecNumber>
    </recommendedName>
    <alternativeName>
        <fullName evidence="4">L-ornithine N(5)-oxygenase</fullName>
    </alternativeName>
</protein>
<evidence type="ECO:0000250" key="1">
    <source>
        <dbReference type="UniProtKB" id="E9QYP0"/>
    </source>
</evidence>
<evidence type="ECO:0000256" key="2">
    <source>
        <dbReference type="SAM" id="MobiDB-lite"/>
    </source>
</evidence>
<evidence type="ECO:0000269" key="3">
    <source>
    </source>
</evidence>
<evidence type="ECO:0000303" key="4">
    <source>
    </source>
</evidence>
<evidence type="ECO:0000305" key="5"/>
<gene>
    <name type="primary">SID1</name>
    <name type="ORF">UMAG_10188</name>
</gene>
<keyword id="KW-0274">FAD</keyword>
<keyword id="KW-0285">Flavoprotein</keyword>
<keyword id="KW-0503">Monooxygenase</keyword>
<keyword id="KW-0521">NADP</keyword>
<keyword id="KW-0560">Oxidoreductase</keyword>
<keyword id="KW-1185">Reference proteome</keyword>
<name>SIDA_MYCMD</name>
<dbReference type="EC" id="1.14.13.196" evidence="1"/>
<dbReference type="EMBL" id="M98523">
    <property type="status" value="NOT_ANNOTATED_CDS"/>
    <property type="molecule type" value="mRNA"/>
</dbReference>
<dbReference type="EMBL" id="M98520">
    <property type="status" value="NOT_ANNOTATED_CDS"/>
    <property type="molecule type" value="Genomic_DNA"/>
</dbReference>
<dbReference type="EMBL" id="CM003143">
    <property type="protein sequence ID" value="KIS70091.1"/>
    <property type="molecule type" value="Genomic_DNA"/>
</dbReference>
<dbReference type="PIR" id="A47266">
    <property type="entry name" value="A47266"/>
</dbReference>
<dbReference type="RefSeq" id="XP_011388351.1">
    <property type="nucleotide sequence ID" value="XM_011390049.1"/>
</dbReference>
<dbReference type="SMR" id="P56584"/>
<dbReference type="STRING" id="237631.P56584"/>
<dbReference type="EnsemblFungi" id="KIS70091">
    <property type="protein sequence ID" value="KIS70091"/>
    <property type="gene ID" value="UMAG_10188"/>
</dbReference>
<dbReference type="GeneID" id="23566252"/>
<dbReference type="KEGG" id="uma:UMAG_10188"/>
<dbReference type="VEuPathDB" id="FungiDB:UMAG_10188"/>
<dbReference type="eggNOG" id="KOG1399">
    <property type="taxonomic scope" value="Eukaryota"/>
</dbReference>
<dbReference type="InParanoid" id="P56584"/>
<dbReference type="OrthoDB" id="3519933at2759"/>
<dbReference type="BioCyc" id="MetaCyc:MONOMER-18961"/>
<dbReference type="UniPathway" id="UPA00783"/>
<dbReference type="Proteomes" id="UP000000561">
    <property type="component" value="Chromosome 4"/>
</dbReference>
<dbReference type="GO" id="GO:0031172">
    <property type="term" value="F:ornithine N5-monooxygenase activity"/>
    <property type="evidence" value="ECO:0007669"/>
    <property type="project" value="RHEA"/>
</dbReference>
<dbReference type="GO" id="GO:0031169">
    <property type="term" value="P:ferrichrome biosynthetic process"/>
    <property type="evidence" value="ECO:0007669"/>
    <property type="project" value="UniProtKB-UniPathway"/>
</dbReference>
<dbReference type="GO" id="GO:0006879">
    <property type="term" value="P:intracellular iron ion homeostasis"/>
    <property type="evidence" value="ECO:0000318"/>
    <property type="project" value="GO_Central"/>
</dbReference>
<dbReference type="Gene3D" id="3.50.50.60">
    <property type="entry name" value="FAD/NAD(P)-binding domain"/>
    <property type="match status" value="1"/>
</dbReference>
<dbReference type="InterPro" id="IPR036188">
    <property type="entry name" value="FAD/NAD-bd_sf"/>
</dbReference>
<dbReference type="InterPro" id="IPR025700">
    <property type="entry name" value="Lys/Orn_oxygenase"/>
</dbReference>
<dbReference type="PANTHER" id="PTHR42802:SF1">
    <property type="entry name" value="L-ORNITHINE N(5)-MONOOXYGENASE"/>
    <property type="match status" value="1"/>
</dbReference>
<dbReference type="PANTHER" id="PTHR42802">
    <property type="entry name" value="MONOOXYGENASE"/>
    <property type="match status" value="1"/>
</dbReference>
<dbReference type="Pfam" id="PF13434">
    <property type="entry name" value="Lys_Orn_oxgnase"/>
    <property type="match status" value="1"/>
</dbReference>
<dbReference type="SUPFAM" id="SSF51905">
    <property type="entry name" value="FAD/NAD(P)-binding domain"/>
    <property type="match status" value="2"/>
</dbReference>
<reference key="1">
    <citation type="journal article" date="1993" name="Proc. Natl. Acad. Sci. U.S.A.">
        <title>sid1, a gene initiating siderophore biosynthesis in Ustilago maydis: molecular characterization, regulation by iron, and role in phytopathogenicity.</title>
        <authorList>
            <person name="Mei B."/>
            <person name="Budde A.D."/>
            <person name="Leong S.A."/>
        </authorList>
    </citation>
    <scope>NUCLEOTIDE SEQUENCE [GENOMIC DNA / MRNA]</scope>
    <scope>FUNCTION</scope>
    <scope>CATALYTIC ACTIVITY</scope>
    <source>
        <strain>518</strain>
    </source>
</reference>
<reference key="2">
    <citation type="journal article" date="2006" name="Nature">
        <title>Insights from the genome of the biotrophic fungal plant pathogen Ustilago maydis.</title>
        <authorList>
            <person name="Kaemper J."/>
            <person name="Kahmann R."/>
            <person name="Boelker M."/>
            <person name="Ma L.-J."/>
            <person name="Brefort T."/>
            <person name="Saville B.J."/>
            <person name="Banuett F."/>
            <person name="Kronstad J.W."/>
            <person name="Gold S.E."/>
            <person name="Mueller O."/>
            <person name="Perlin M.H."/>
            <person name="Woesten H.A.B."/>
            <person name="de Vries R."/>
            <person name="Ruiz-Herrera J."/>
            <person name="Reynaga-Pena C.G."/>
            <person name="Snetselaar K."/>
            <person name="McCann M."/>
            <person name="Perez-Martin J."/>
            <person name="Feldbruegge M."/>
            <person name="Basse C.W."/>
            <person name="Steinberg G."/>
            <person name="Ibeas J.I."/>
            <person name="Holloman W."/>
            <person name="Guzman P."/>
            <person name="Farman M.L."/>
            <person name="Stajich J.E."/>
            <person name="Sentandreu R."/>
            <person name="Gonzalez-Prieto J.M."/>
            <person name="Kennell J.C."/>
            <person name="Molina L."/>
            <person name="Schirawski J."/>
            <person name="Mendoza-Mendoza A."/>
            <person name="Greilinger D."/>
            <person name="Muench K."/>
            <person name="Roessel N."/>
            <person name="Scherer M."/>
            <person name="Vranes M."/>
            <person name="Ladendorf O."/>
            <person name="Vincon V."/>
            <person name="Fuchs U."/>
            <person name="Sandrock B."/>
            <person name="Meng S."/>
            <person name="Ho E.C.H."/>
            <person name="Cahill M.J."/>
            <person name="Boyce K.J."/>
            <person name="Klose J."/>
            <person name="Klosterman S.J."/>
            <person name="Deelstra H.J."/>
            <person name="Ortiz-Castellanos L."/>
            <person name="Li W."/>
            <person name="Sanchez-Alonso P."/>
            <person name="Schreier P.H."/>
            <person name="Haeuser-Hahn I."/>
            <person name="Vaupel M."/>
            <person name="Koopmann E."/>
            <person name="Friedrich G."/>
            <person name="Voss H."/>
            <person name="Schlueter T."/>
            <person name="Margolis J."/>
            <person name="Platt D."/>
            <person name="Swimmer C."/>
            <person name="Gnirke A."/>
            <person name="Chen F."/>
            <person name="Vysotskaia V."/>
            <person name="Mannhaupt G."/>
            <person name="Gueldener U."/>
            <person name="Muensterkoetter M."/>
            <person name="Haase D."/>
            <person name="Oesterheld M."/>
            <person name="Mewes H.-W."/>
            <person name="Mauceli E.W."/>
            <person name="DeCaprio D."/>
            <person name="Wade C.M."/>
            <person name="Butler J."/>
            <person name="Young S.K."/>
            <person name="Jaffe D.B."/>
            <person name="Calvo S.E."/>
            <person name="Nusbaum C."/>
            <person name="Galagan J.E."/>
            <person name="Birren B.W."/>
        </authorList>
    </citation>
    <scope>NUCLEOTIDE SEQUENCE [LARGE SCALE GENOMIC DNA]</scope>
    <source>
        <strain>DSM 14603 / FGSC 9021 / UM521</strain>
    </source>
</reference>
<reference key="3">
    <citation type="submission" date="2014-09" db="EMBL/GenBank/DDBJ databases">
        <authorList>
            <person name="Gueldener U."/>
            <person name="Muensterkoetter M."/>
            <person name="Walter M.C."/>
            <person name="Mannhaupt G."/>
            <person name="Kahmann R."/>
        </authorList>
    </citation>
    <scope>GENOME REANNOTATION</scope>
    <source>
        <strain>DSM 14603 / FGSC 9021 / UM521</strain>
    </source>
</reference>
<accession>P56584</accession>
<accession>A0A0D1E2N5</accession>
<accession>Q4P3Z9</accession>
<sequence length="649" mass="71531">MSAPTLDVESPLAASTSSLRAMNMVSSHTTVAKDEIYDLLGIGFGPAHLALSISLRESSEANETNFKAHFLEKRGHFAWHPALLLPGSQLQVSPLKDLVTLRDPASTYSFYNYLHSHGRLARYINKEQGVPSRREWTSYLAWAARRMNQAVSYGQDVISIEPLALASASPDAKQDTVAVRPASAQEADSLCLYQVRIRDESTGHIVNRYARNLSVAVGGVPKLPPAFQAAWDEQQRAPHSIPRLVHSGFYIPSMLKLEPELHKAASLRHPDAAAQLDDSSRLRLAVIGAGQSSTEMFMNLHSRFPSAIVTMIFRASALVPSDDTGFVNSAAFDPERTDEFWQASETQRRKWLQEFKRTNYSVVRTDLLNELHDAMYDKYEVQLPEELQDPTEKQAGRMEMRRCTEVVEVTPLDDGIQLTMRDNLRNAKLETIRFDAVFLGTGFIRSPSKMRFLEQLKPFYPALDAEWMSRDTIAEEDEVSKSIDVEDEEVIERRREMLRGITRDYRLVPASAMQSDAVRSGKSSPGSGSDASSTSSQQTLASENSTENLPEASLYVLGGNEATHGLSDSLLSIVAHRAGELTTSLLQRLPRTRRGTASSAATQPAASTVASAAKTSPTVSVTQTKARQAAQVVNDKLAALSGLHLDATS</sequence>